<comment type="function">
    <text evidence="1">Catalyzes the reversible formation of acyl-phosphate (acyl-PO(4)) from acyl-[acyl-carrier-protein] (acyl-ACP). This enzyme utilizes acyl-ACP as fatty acyl donor, but not acyl-CoA.</text>
</comment>
<comment type="catalytic activity">
    <reaction evidence="1">
        <text>a fatty acyl-[ACP] + phosphate = an acyl phosphate + holo-[ACP]</text>
        <dbReference type="Rhea" id="RHEA:42292"/>
        <dbReference type="Rhea" id="RHEA-COMP:9685"/>
        <dbReference type="Rhea" id="RHEA-COMP:14125"/>
        <dbReference type="ChEBI" id="CHEBI:43474"/>
        <dbReference type="ChEBI" id="CHEBI:59918"/>
        <dbReference type="ChEBI" id="CHEBI:64479"/>
        <dbReference type="ChEBI" id="CHEBI:138651"/>
        <dbReference type="EC" id="2.3.1.274"/>
    </reaction>
</comment>
<comment type="pathway">
    <text evidence="1">Lipid metabolism; phospholipid metabolism.</text>
</comment>
<comment type="subunit">
    <text evidence="1">Homodimer. Probably interacts with PlsY.</text>
</comment>
<comment type="subcellular location">
    <subcellularLocation>
        <location evidence="1">Cytoplasm</location>
    </subcellularLocation>
    <text evidence="1">Associated with the membrane possibly through PlsY.</text>
</comment>
<comment type="similarity">
    <text evidence="1">Belongs to the PlsX family.</text>
</comment>
<comment type="caution">
    <text evidence="2">Could be the product of a pseudogene. Resulting from truncation by frameshift mutation.</text>
</comment>
<comment type="sequence caution" evidence="2">
    <conflict type="frameshift">
        <sequence resource="EMBL-CDS" id="BAB81426"/>
    </conflict>
</comment>
<dbReference type="EC" id="2.3.1.274" evidence="1"/>
<dbReference type="EMBL" id="BA000016">
    <property type="protein sequence ID" value="BAB81426.1"/>
    <property type="status" value="ALT_FRAME"/>
    <property type="molecule type" value="Genomic_DNA"/>
</dbReference>
<dbReference type="SMR" id="Q8XJN6"/>
<dbReference type="STRING" id="195102.gene:10490984"/>
<dbReference type="KEGG" id="cpe:CPE1720"/>
<dbReference type="HOGENOM" id="CLU_039379_2_0_9"/>
<dbReference type="UniPathway" id="UPA00085"/>
<dbReference type="Proteomes" id="UP000000818">
    <property type="component" value="Chromosome"/>
</dbReference>
<dbReference type="GO" id="GO:0005737">
    <property type="term" value="C:cytoplasm"/>
    <property type="evidence" value="ECO:0007669"/>
    <property type="project" value="UniProtKB-SubCell"/>
</dbReference>
<dbReference type="GO" id="GO:0043811">
    <property type="term" value="F:phosphate:acyl-[acyl carrier protein] acyltransferase activity"/>
    <property type="evidence" value="ECO:0007669"/>
    <property type="project" value="UniProtKB-UniRule"/>
</dbReference>
<dbReference type="GO" id="GO:0006633">
    <property type="term" value="P:fatty acid biosynthetic process"/>
    <property type="evidence" value="ECO:0007669"/>
    <property type="project" value="UniProtKB-UniRule"/>
</dbReference>
<dbReference type="GO" id="GO:0008654">
    <property type="term" value="P:phospholipid biosynthetic process"/>
    <property type="evidence" value="ECO:0007669"/>
    <property type="project" value="UniProtKB-KW"/>
</dbReference>
<dbReference type="Gene3D" id="3.40.718.10">
    <property type="entry name" value="Isopropylmalate Dehydrogenase"/>
    <property type="match status" value="1"/>
</dbReference>
<dbReference type="HAMAP" id="MF_00019">
    <property type="entry name" value="PlsX"/>
    <property type="match status" value="1"/>
</dbReference>
<dbReference type="InterPro" id="IPR003664">
    <property type="entry name" value="FA_synthesis"/>
</dbReference>
<dbReference type="InterPro" id="IPR012281">
    <property type="entry name" value="Phospholipid_synth_PlsX-like"/>
</dbReference>
<dbReference type="NCBIfam" id="TIGR00182">
    <property type="entry name" value="plsX"/>
    <property type="match status" value="1"/>
</dbReference>
<dbReference type="PANTHER" id="PTHR30100">
    <property type="entry name" value="FATTY ACID/PHOSPHOLIPID SYNTHESIS PROTEIN PLSX"/>
    <property type="match status" value="1"/>
</dbReference>
<dbReference type="PANTHER" id="PTHR30100:SF1">
    <property type="entry name" value="PHOSPHATE ACYLTRANSFERASE"/>
    <property type="match status" value="1"/>
</dbReference>
<dbReference type="Pfam" id="PF02504">
    <property type="entry name" value="FA_synthesis"/>
    <property type="match status" value="1"/>
</dbReference>
<dbReference type="PIRSF" id="PIRSF002465">
    <property type="entry name" value="Phsphlp_syn_PlsX"/>
    <property type="match status" value="1"/>
</dbReference>
<dbReference type="SUPFAM" id="SSF53659">
    <property type="entry name" value="Isocitrate/Isopropylmalate dehydrogenase-like"/>
    <property type="match status" value="1"/>
</dbReference>
<proteinExistence type="uncertain"/>
<organism>
    <name type="scientific">Clostridium perfringens (strain 13 / Type A)</name>
    <dbReference type="NCBI Taxonomy" id="195102"/>
    <lineage>
        <taxon>Bacteria</taxon>
        <taxon>Bacillati</taxon>
        <taxon>Bacillota</taxon>
        <taxon>Clostridia</taxon>
        <taxon>Eubacteriales</taxon>
        <taxon>Clostridiaceae</taxon>
        <taxon>Clostridium</taxon>
    </lineage>
</organism>
<accession>Q8XJN6</accession>
<protein>
    <recommendedName>
        <fullName>Putative phosphate acyltransferase</fullName>
        <ecNumber evidence="1">2.3.1.274</ecNumber>
    </recommendedName>
    <alternativeName>
        <fullName evidence="1">Acyl-ACP phosphotransacylase</fullName>
    </alternativeName>
    <alternativeName>
        <fullName evidence="1">Acyl-[acyl-carrier-protein]--phosphate acyltransferase</fullName>
    </alternativeName>
    <alternativeName>
        <fullName evidence="1">Phosphate-acyl-ACP acyltransferase</fullName>
    </alternativeName>
</protein>
<feature type="chain" id="PRO_0000189869" description="Putative phosphate acyltransferase">
    <location>
        <begin position="1"/>
        <end position="339"/>
    </location>
</feature>
<reference key="1">
    <citation type="journal article" date="2002" name="Proc. Natl. Acad. Sci. U.S.A.">
        <title>Complete genome sequence of Clostridium perfringens, an anaerobic flesh-eater.</title>
        <authorList>
            <person name="Shimizu T."/>
            <person name="Ohtani K."/>
            <person name="Hirakawa H."/>
            <person name="Ohshima K."/>
            <person name="Yamashita A."/>
            <person name="Shiba T."/>
            <person name="Ogasawara N."/>
            <person name="Hattori M."/>
            <person name="Kuhara S."/>
            <person name="Hayashi H."/>
        </authorList>
    </citation>
    <scope>NUCLEOTIDE SEQUENCE [LARGE SCALE GENOMIC DNA]</scope>
    <source>
        <strain>13 / Type A</strain>
    </source>
</reference>
<sequence length="339" mass="36956">MRVAVDGMGGDHSPSAVVKGCVQALEEFKDIEIYITGPEDILKEAFSKFKYDKERVTFIDAKEVISTNEHPAMAVKKKKDSSLVKALRLVKDNQCEAVISAGSTGAFLTGCTLIVGRIKGVERPALAPVMPGKNGPFMIIDAGANVDSKPSYLVQFAKMGEVYFKSVMDVNNPKVGLVNIGEEEEKGNDLTKATYKLLKEERDINFIGNVEPREVSTGDVDVLVCDGFVGNTVLKMYEGVASTILSMIKSEVKSSFLAKLGVPFLAPALMNLKKKMDYKEYGGAPFLGVKGICVKAHGSSDAKAFKNAIRQARKFHENDLIGKLSEEITKKSFDNQKNI</sequence>
<keyword id="KW-0963">Cytoplasm</keyword>
<keyword id="KW-0444">Lipid biosynthesis</keyword>
<keyword id="KW-0443">Lipid metabolism</keyword>
<keyword id="KW-0594">Phospholipid biosynthesis</keyword>
<keyword id="KW-1208">Phospholipid metabolism</keyword>
<keyword id="KW-1185">Reference proteome</keyword>
<keyword id="KW-0808">Transferase</keyword>
<gene>
    <name evidence="1" type="primary">plsX</name>
    <name type="ordered locus">CPE1720</name>
</gene>
<evidence type="ECO:0000255" key="1">
    <source>
        <dbReference type="HAMAP-Rule" id="MF_00019"/>
    </source>
</evidence>
<evidence type="ECO:0000305" key="2"/>
<name>PLSX_CLOPE</name>